<evidence type="ECO:0000250" key="1">
    <source>
        <dbReference type="UniProtKB" id="P04798"/>
    </source>
</evidence>
<evidence type="ECO:0000255" key="2"/>
<evidence type="ECO:0000256" key="3">
    <source>
        <dbReference type="SAM" id="MobiDB-lite"/>
    </source>
</evidence>
<evidence type="ECO:0000269" key="4">
    <source>
    </source>
</evidence>
<evidence type="ECO:0000269" key="5">
    <source>
    </source>
</evidence>
<evidence type="ECO:0000269" key="6">
    <source>
    </source>
</evidence>
<evidence type="ECO:0000303" key="7">
    <source>
    </source>
</evidence>
<evidence type="ECO:0000303" key="8">
    <source>
    </source>
</evidence>
<evidence type="ECO:0000305" key="9"/>
<evidence type="ECO:0000312" key="10">
    <source>
        <dbReference type="Araport" id="AT3G50660"/>
    </source>
</evidence>
<evidence type="ECO:0000312" key="11">
    <source>
        <dbReference type="EMBL" id="CAB62435.1"/>
    </source>
</evidence>
<reference key="1">
    <citation type="journal article" date="1998" name="Plant Cell">
        <title>The DWF4 gene of Arabidopsis encodes a cytochrome P450 that mediates multiple 22alpha-hydroxylation steps in brassinosteroid biosynthesis.</title>
        <authorList>
            <person name="Choe S."/>
            <person name="Dilkes B.P."/>
            <person name="Fujioka S."/>
            <person name="Takatsuto S."/>
            <person name="Sakurai A."/>
            <person name="Feldmann K.A."/>
        </authorList>
    </citation>
    <scope>NUCLEOTIDE SEQUENCE [GENOMIC DNA]</scope>
    <scope>MUTAGENESIS OF 324-ILE--PHE-326</scope>
    <scope>FUNCTION</scope>
    <scope>CATALYTIC ACTIVITY</scope>
    <scope>PATHWAY</scope>
    <source>
        <strain>cv. Wassilewskija-2</strain>
    </source>
</reference>
<reference key="2">
    <citation type="journal article" date="2000" name="Nature">
        <title>Sequence and analysis of chromosome 3 of the plant Arabidopsis thaliana.</title>
        <authorList>
            <person name="Salanoubat M."/>
            <person name="Lemcke K."/>
            <person name="Rieger M."/>
            <person name="Ansorge W."/>
            <person name="Unseld M."/>
            <person name="Fartmann B."/>
            <person name="Valle G."/>
            <person name="Bloecker H."/>
            <person name="Perez-Alonso M."/>
            <person name="Obermaier B."/>
            <person name="Delseny M."/>
            <person name="Boutry M."/>
            <person name="Grivell L.A."/>
            <person name="Mache R."/>
            <person name="Puigdomenech P."/>
            <person name="De Simone V."/>
            <person name="Choisne N."/>
            <person name="Artiguenave F."/>
            <person name="Robert C."/>
            <person name="Brottier P."/>
            <person name="Wincker P."/>
            <person name="Cattolico L."/>
            <person name="Weissenbach J."/>
            <person name="Saurin W."/>
            <person name="Quetier F."/>
            <person name="Schaefer M."/>
            <person name="Mueller-Auer S."/>
            <person name="Gabel C."/>
            <person name="Fuchs M."/>
            <person name="Benes V."/>
            <person name="Wurmbach E."/>
            <person name="Drzonek H."/>
            <person name="Erfle H."/>
            <person name="Jordan N."/>
            <person name="Bangert S."/>
            <person name="Wiedelmann R."/>
            <person name="Kranz H."/>
            <person name="Voss H."/>
            <person name="Holland R."/>
            <person name="Brandt P."/>
            <person name="Nyakatura G."/>
            <person name="Vezzi A."/>
            <person name="D'Angelo M."/>
            <person name="Pallavicini A."/>
            <person name="Toppo S."/>
            <person name="Simionati B."/>
            <person name="Conrad A."/>
            <person name="Hornischer K."/>
            <person name="Kauer G."/>
            <person name="Loehnert T.-H."/>
            <person name="Nordsiek G."/>
            <person name="Reichelt J."/>
            <person name="Scharfe M."/>
            <person name="Schoen O."/>
            <person name="Bargues M."/>
            <person name="Terol J."/>
            <person name="Climent J."/>
            <person name="Navarro P."/>
            <person name="Collado C."/>
            <person name="Perez-Perez A."/>
            <person name="Ottenwaelder B."/>
            <person name="Duchemin D."/>
            <person name="Cooke R."/>
            <person name="Laudie M."/>
            <person name="Berger-Llauro C."/>
            <person name="Purnelle B."/>
            <person name="Masuy D."/>
            <person name="de Haan M."/>
            <person name="Maarse A.C."/>
            <person name="Alcaraz J.-P."/>
            <person name="Cottet A."/>
            <person name="Casacuberta E."/>
            <person name="Monfort A."/>
            <person name="Argiriou A."/>
            <person name="Flores M."/>
            <person name="Liguori R."/>
            <person name="Vitale D."/>
            <person name="Mannhaupt G."/>
            <person name="Haase D."/>
            <person name="Schoof H."/>
            <person name="Rudd S."/>
            <person name="Zaccaria P."/>
            <person name="Mewes H.-W."/>
            <person name="Mayer K.F.X."/>
            <person name="Kaul S."/>
            <person name="Town C.D."/>
            <person name="Koo H.L."/>
            <person name="Tallon L.J."/>
            <person name="Jenkins J."/>
            <person name="Rooney T."/>
            <person name="Rizzo M."/>
            <person name="Walts A."/>
            <person name="Utterback T."/>
            <person name="Fujii C.Y."/>
            <person name="Shea T.P."/>
            <person name="Creasy T.H."/>
            <person name="Haas B."/>
            <person name="Maiti R."/>
            <person name="Wu D."/>
            <person name="Peterson J."/>
            <person name="Van Aken S."/>
            <person name="Pai G."/>
            <person name="Militscher J."/>
            <person name="Sellers P."/>
            <person name="Gill J.E."/>
            <person name="Feldblyum T.V."/>
            <person name="Preuss D."/>
            <person name="Lin X."/>
            <person name="Nierman W.C."/>
            <person name="Salzberg S.L."/>
            <person name="White O."/>
            <person name="Venter J.C."/>
            <person name="Fraser C.M."/>
            <person name="Kaneko T."/>
            <person name="Nakamura Y."/>
            <person name="Sato S."/>
            <person name="Kato T."/>
            <person name="Asamizu E."/>
            <person name="Sasamoto S."/>
            <person name="Kimura T."/>
            <person name="Idesawa K."/>
            <person name="Kawashima K."/>
            <person name="Kishida Y."/>
            <person name="Kiyokawa C."/>
            <person name="Kohara M."/>
            <person name="Matsumoto M."/>
            <person name="Matsuno A."/>
            <person name="Muraki A."/>
            <person name="Nakayama S."/>
            <person name="Nakazaki N."/>
            <person name="Shinpo S."/>
            <person name="Takeuchi C."/>
            <person name="Wada T."/>
            <person name="Watanabe A."/>
            <person name="Yamada M."/>
            <person name="Yasuda M."/>
            <person name="Tabata S."/>
        </authorList>
    </citation>
    <scope>NUCLEOTIDE SEQUENCE [LARGE SCALE GENOMIC DNA]</scope>
    <source>
        <strain>cv. Columbia</strain>
    </source>
</reference>
<reference key="3">
    <citation type="journal article" date="2017" name="Plant J.">
        <title>Araport11: a complete reannotation of the Arabidopsis thaliana reference genome.</title>
        <authorList>
            <person name="Cheng C.Y."/>
            <person name="Krishnakumar V."/>
            <person name="Chan A.P."/>
            <person name="Thibaud-Nissen F."/>
            <person name="Schobel S."/>
            <person name="Town C.D."/>
        </authorList>
    </citation>
    <scope>GENOME REANNOTATION</scope>
    <source>
        <strain>cv. Columbia</strain>
    </source>
</reference>
<reference key="4">
    <citation type="journal article" date="2003" name="Science">
        <title>Empirical analysis of transcriptional activity in the Arabidopsis genome.</title>
        <authorList>
            <person name="Yamada K."/>
            <person name="Lim J."/>
            <person name="Dale J.M."/>
            <person name="Chen H."/>
            <person name="Shinn P."/>
            <person name="Palm C.J."/>
            <person name="Southwick A.M."/>
            <person name="Wu H.C."/>
            <person name="Kim C.J."/>
            <person name="Nguyen M."/>
            <person name="Pham P.K."/>
            <person name="Cheuk R.F."/>
            <person name="Karlin-Newmann G."/>
            <person name="Liu S.X."/>
            <person name="Lam B."/>
            <person name="Sakano H."/>
            <person name="Wu T."/>
            <person name="Yu G."/>
            <person name="Miranda M."/>
            <person name="Quach H.L."/>
            <person name="Tripp M."/>
            <person name="Chang C.H."/>
            <person name="Lee J.M."/>
            <person name="Toriumi M.J."/>
            <person name="Chan M.M."/>
            <person name="Tang C.C."/>
            <person name="Onodera C.S."/>
            <person name="Deng J.M."/>
            <person name="Akiyama K."/>
            <person name="Ansari Y."/>
            <person name="Arakawa T."/>
            <person name="Banh J."/>
            <person name="Banno F."/>
            <person name="Bowser L."/>
            <person name="Brooks S.Y."/>
            <person name="Carninci P."/>
            <person name="Chao Q."/>
            <person name="Choy N."/>
            <person name="Enju A."/>
            <person name="Goldsmith A.D."/>
            <person name="Gurjal M."/>
            <person name="Hansen N.F."/>
            <person name="Hayashizaki Y."/>
            <person name="Johnson-Hopson C."/>
            <person name="Hsuan V.W."/>
            <person name="Iida K."/>
            <person name="Karnes M."/>
            <person name="Khan S."/>
            <person name="Koesema E."/>
            <person name="Ishida J."/>
            <person name="Jiang P.X."/>
            <person name="Jones T."/>
            <person name="Kawai J."/>
            <person name="Kamiya A."/>
            <person name="Meyers C."/>
            <person name="Nakajima M."/>
            <person name="Narusaka M."/>
            <person name="Seki M."/>
            <person name="Sakurai T."/>
            <person name="Satou M."/>
            <person name="Tamse R."/>
            <person name="Vaysberg M."/>
            <person name="Wallender E.K."/>
            <person name="Wong C."/>
            <person name="Yamamura Y."/>
            <person name="Yuan S."/>
            <person name="Shinozaki K."/>
            <person name="Davis R.W."/>
            <person name="Theologis A."/>
            <person name="Ecker J.R."/>
        </authorList>
    </citation>
    <scope>NUCLEOTIDE SEQUENCE [LARGE SCALE MRNA]</scope>
    <source>
        <strain>cv. Columbia</strain>
    </source>
</reference>
<reference key="5">
    <citation type="journal article" date="2003" name="Plant Physiol.">
        <title>Organ-specific expression of brassinosteroid-biosynthetic genes and distribution of endogenous brassinosteroids in Arabidopsis.</title>
        <authorList>
            <person name="Shimada Y."/>
            <person name="Goda H."/>
            <person name="Nakamura A."/>
            <person name="Takatsuto S."/>
            <person name="Fujioka S."/>
            <person name="Yoshida S."/>
        </authorList>
    </citation>
    <scope>TISSUE SPECIFICITY</scope>
</reference>
<reference key="6">
    <citation type="journal article" date="2006" name="Plant J.">
        <title>Arabidopsis CYP90B1 catalyses the early C-22 hydroxylation of C27, C28 and C29 sterols.</title>
        <authorList>
            <person name="Fujita S."/>
            <person name="Ohnishi T."/>
            <person name="Watanabe B."/>
            <person name="Yokota T."/>
            <person name="Takatsuto S."/>
            <person name="Fujioka S."/>
            <person name="Yoshida S."/>
            <person name="Sakata K."/>
            <person name="Mizutani M."/>
        </authorList>
    </citation>
    <scope>FUNCTION</scope>
    <scope>CATALYTIC ACTIVITY</scope>
    <scope>PATHWAY</scope>
    <scope>BIOPHYSICOCHEMICAL PROPERTIES</scope>
</reference>
<feature type="chain" id="PRO_0000052185" description="Steroid (22S)-hydroxylase">
    <location>
        <begin position="1"/>
        <end position="513"/>
    </location>
</feature>
<feature type="transmembrane region" description="Helical" evidence="2">
    <location>
        <begin position="8"/>
        <end position="28"/>
    </location>
</feature>
<feature type="region of interest" description="Disordered" evidence="3">
    <location>
        <begin position="252"/>
        <end position="277"/>
    </location>
</feature>
<feature type="compositionally biased region" description="Acidic residues" evidence="3">
    <location>
        <begin position="254"/>
        <end position="269"/>
    </location>
</feature>
<feature type="binding site" description="axial binding residue" evidence="1">
    <location>
        <position position="462"/>
    </location>
    <ligand>
        <name>heme</name>
        <dbReference type="ChEBI" id="CHEBI:30413"/>
    </ligand>
    <ligandPart>
        <name>Fe</name>
        <dbReference type="ChEBI" id="CHEBI:18248"/>
    </ligandPart>
</feature>
<feature type="mutagenesis site" description="In dwf4-2; dwarf plant." evidence="6">
    <location>
        <begin position="324"/>
        <end position="326"/>
    </location>
</feature>
<feature type="sequence conflict" description="In Ref. 1; AAC05093." evidence="9" ref="1">
    <original>K</original>
    <variation>Q</variation>
    <location>
        <position position="492"/>
    </location>
</feature>
<proteinExistence type="evidence at protein level"/>
<protein>
    <recommendedName>
        <fullName evidence="9">Steroid (22S)-hydroxylase</fullName>
        <ecNumber evidence="5 6">1.14.14.178</ecNumber>
    </recommendedName>
    <alternativeName>
        <fullName evidence="7">(22S)-22-hydroxycampesterol synthase</fullName>
    </alternativeName>
    <alternativeName>
        <fullName evidence="8">6-deoxycathasterone synthase</fullName>
    </alternativeName>
    <alternativeName>
        <fullName evidence="8">Cathasterone synthase</fullName>
    </alternativeName>
    <alternativeName>
        <fullName evidence="8">Cytochrome P450 90B1</fullName>
        <shortName evidence="8">AtCYP90B1</shortName>
    </alternativeName>
    <alternativeName>
        <fullName evidence="8">Protein DWARF 4</fullName>
        <shortName evidence="8">Dwarf4</shortName>
    </alternativeName>
    <alternativeName>
        <fullName evidence="8">Steroid 22-alpha-hydroxylase</fullName>
    </alternativeName>
</protein>
<accession>O64989</accession>
<accession>Q9SCQ9</accession>
<organism>
    <name type="scientific">Arabidopsis thaliana</name>
    <name type="common">Mouse-ear cress</name>
    <dbReference type="NCBI Taxonomy" id="3702"/>
    <lineage>
        <taxon>Eukaryota</taxon>
        <taxon>Viridiplantae</taxon>
        <taxon>Streptophyta</taxon>
        <taxon>Embryophyta</taxon>
        <taxon>Tracheophyta</taxon>
        <taxon>Spermatophyta</taxon>
        <taxon>Magnoliopsida</taxon>
        <taxon>eudicotyledons</taxon>
        <taxon>Gunneridae</taxon>
        <taxon>Pentapetalae</taxon>
        <taxon>rosids</taxon>
        <taxon>malvids</taxon>
        <taxon>Brassicales</taxon>
        <taxon>Brassicaceae</taxon>
        <taxon>Camelineae</taxon>
        <taxon>Arabidopsis</taxon>
    </lineage>
</organism>
<name>C90B1_ARATH</name>
<comment type="function">
    <text evidence="5 6">Catalyzes the C22-alpha-hydroxylation step in brassinosteroids biosynthesis (PubMed:16460510, PubMed:9490746). Converts campesterol (CR) to (22S)-22-hydroxycampesterol (22-OHCR, 22-hydroxyCR), campestanol (CN) to 6-deoxycathasterone (6-deoxoCT), and 6-oxocampestanol (6-oxoCN) to cathasterone (CT) (PubMed:16460510, PubMed:9490746). Can also use cholesterol and cholestanol as substrates (PubMed:16460510, PubMed:9490746).</text>
</comment>
<comment type="catalytic activity">
    <reaction evidence="5">
        <text>a C27-steroid + reduced [NADPH--hemoprotein reductase] + O2 = a (22S)-22-hydroxy C27-steroid + oxidized [NADPH--hemoprotein reductase] + H2O + H(+)</text>
        <dbReference type="Rhea" id="RHEA:70059"/>
        <dbReference type="Rhea" id="RHEA-COMP:11964"/>
        <dbReference type="Rhea" id="RHEA-COMP:11965"/>
        <dbReference type="ChEBI" id="CHEBI:15377"/>
        <dbReference type="ChEBI" id="CHEBI:15378"/>
        <dbReference type="ChEBI" id="CHEBI:15379"/>
        <dbReference type="ChEBI" id="CHEBI:57618"/>
        <dbReference type="ChEBI" id="CHEBI:58210"/>
        <dbReference type="ChEBI" id="CHEBI:188919"/>
        <dbReference type="ChEBI" id="CHEBI:188920"/>
        <dbReference type="EC" id="1.14.14.178"/>
    </reaction>
    <physiologicalReaction direction="left-to-right" evidence="5">
        <dbReference type="Rhea" id="RHEA:70060"/>
    </physiologicalReaction>
</comment>
<comment type="catalytic activity">
    <reaction evidence="5 6">
        <text>a C28-steroid + reduced [NADPH--hemoprotein reductase] + O2 = a (22S)-22-hydroxy C28-steroid + oxidized [NADPH--hemoprotein reductase] + H2O + H(+)</text>
        <dbReference type="Rhea" id="RHEA:70063"/>
        <dbReference type="Rhea" id="RHEA-COMP:11964"/>
        <dbReference type="Rhea" id="RHEA-COMP:11965"/>
        <dbReference type="ChEBI" id="CHEBI:15377"/>
        <dbReference type="ChEBI" id="CHEBI:15378"/>
        <dbReference type="ChEBI" id="CHEBI:15379"/>
        <dbReference type="ChEBI" id="CHEBI:57618"/>
        <dbReference type="ChEBI" id="CHEBI:58210"/>
        <dbReference type="ChEBI" id="CHEBI:188921"/>
        <dbReference type="ChEBI" id="CHEBI:188922"/>
        <dbReference type="EC" id="1.14.14.178"/>
    </reaction>
    <physiologicalReaction direction="left-to-right" evidence="5 6">
        <dbReference type="Rhea" id="RHEA:70064"/>
    </physiologicalReaction>
</comment>
<comment type="catalytic activity">
    <reaction evidence="5">
        <text>a C29-steroid + reduced [NADPH--hemoprotein reductase] + O2 = a (22S)-22-hydroxy C29-steroid + oxidized [NADPH--hemoprotein reductase] + H2O + H(+)</text>
        <dbReference type="Rhea" id="RHEA:70067"/>
        <dbReference type="Rhea" id="RHEA-COMP:11964"/>
        <dbReference type="Rhea" id="RHEA-COMP:11965"/>
        <dbReference type="ChEBI" id="CHEBI:15377"/>
        <dbReference type="ChEBI" id="CHEBI:15378"/>
        <dbReference type="ChEBI" id="CHEBI:15379"/>
        <dbReference type="ChEBI" id="CHEBI:57618"/>
        <dbReference type="ChEBI" id="CHEBI:58210"/>
        <dbReference type="ChEBI" id="CHEBI:188923"/>
        <dbReference type="ChEBI" id="CHEBI:188924"/>
        <dbReference type="EC" id="1.14.14.178"/>
    </reaction>
    <physiologicalReaction direction="left-to-right" evidence="5">
        <dbReference type="Rhea" id="RHEA:70068"/>
    </physiologicalReaction>
</comment>
<comment type="catalytic activity">
    <reaction evidence="5">
        <text>cholesterol + reduced [NADPH--hemoprotein reductase] + O2 = (22S)-22-hydroxycholesterol + oxidized [NADPH--hemoprotein reductase] + H2O + H(+)</text>
        <dbReference type="Rhea" id="RHEA:69839"/>
        <dbReference type="Rhea" id="RHEA-COMP:11964"/>
        <dbReference type="Rhea" id="RHEA-COMP:11965"/>
        <dbReference type="ChEBI" id="CHEBI:1301"/>
        <dbReference type="ChEBI" id="CHEBI:15377"/>
        <dbReference type="ChEBI" id="CHEBI:15378"/>
        <dbReference type="ChEBI" id="CHEBI:15379"/>
        <dbReference type="ChEBI" id="CHEBI:16113"/>
        <dbReference type="ChEBI" id="CHEBI:57618"/>
        <dbReference type="ChEBI" id="CHEBI:58210"/>
    </reaction>
    <physiologicalReaction direction="left-to-right" evidence="5">
        <dbReference type="Rhea" id="RHEA:69840"/>
    </physiologicalReaction>
</comment>
<comment type="catalytic activity">
    <reaction evidence="5">
        <text>cholestanol + reduced [NADPH--hemoprotein reductase] + O2 = (22S)-22-hydroxycholestanol + oxidized [NADPH--hemoprotein reductase] + H2O + H(+)</text>
        <dbReference type="Rhea" id="RHEA:69871"/>
        <dbReference type="Rhea" id="RHEA-COMP:11964"/>
        <dbReference type="Rhea" id="RHEA-COMP:11965"/>
        <dbReference type="ChEBI" id="CHEBI:15377"/>
        <dbReference type="ChEBI" id="CHEBI:15378"/>
        <dbReference type="ChEBI" id="CHEBI:15379"/>
        <dbReference type="ChEBI" id="CHEBI:57618"/>
        <dbReference type="ChEBI" id="CHEBI:58210"/>
        <dbReference type="ChEBI" id="CHEBI:86570"/>
        <dbReference type="ChEBI" id="CHEBI:188465"/>
    </reaction>
    <physiologicalReaction direction="left-to-right" evidence="5">
        <dbReference type="Rhea" id="RHEA:69872"/>
    </physiologicalReaction>
</comment>
<comment type="catalytic activity">
    <reaction evidence="5 6">
        <text>campestanol + reduced [NADPH--hemoprotein reductase] + O2 = 6-deoxycathasterone + oxidized [NADPH--hemoprotein reductase] + H2O + H(+)</text>
        <dbReference type="Rhea" id="RHEA:69831"/>
        <dbReference type="Rhea" id="RHEA-COMP:11964"/>
        <dbReference type="Rhea" id="RHEA-COMP:11965"/>
        <dbReference type="ChEBI" id="CHEBI:15377"/>
        <dbReference type="ChEBI" id="CHEBI:15378"/>
        <dbReference type="ChEBI" id="CHEBI:15379"/>
        <dbReference type="ChEBI" id="CHEBI:20714"/>
        <dbReference type="ChEBI" id="CHEBI:36799"/>
        <dbReference type="ChEBI" id="CHEBI:57618"/>
        <dbReference type="ChEBI" id="CHEBI:58210"/>
    </reaction>
    <physiologicalReaction direction="left-to-right" evidence="5 6">
        <dbReference type="Rhea" id="RHEA:69832"/>
    </physiologicalReaction>
</comment>
<comment type="catalytic activity">
    <reaction evidence="5">
        <text>campesterol + reduced [NADPH--hemoprotein reductase] + O2 = (22S)-22-hydroxycampesterol + oxidized [NADPH--hemoprotein reductase] + H2O + H(+)</text>
        <dbReference type="Rhea" id="RHEA:69835"/>
        <dbReference type="Rhea" id="RHEA-COMP:11964"/>
        <dbReference type="Rhea" id="RHEA-COMP:11965"/>
        <dbReference type="ChEBI" id="CHEBI:15377"/>
        <dbReference type="ChEBI" id="CHEBI:15378"/>
        <dbReference type="ChEBI" id="CHEBI:15379"/>
        <dbReference type="ChEBI" id="CHEBI:28623"/>
        <dbReference type="ChEBI" id="CHEBI:57618"/>
        <dbReference type="ChEBI" id="CHEBI:58210"/>
        <dbReference type="ChEBI" id="CHEBI:72331"/>
    </reaction>
    <physiologicalReaction direction="left-to-right" evidence="5">
        <dbReference type="Rhea" id="RHEA:69836"/>
    </physiologicalReaction>
</comment>
<comment type="catalytic activity">
    <reaction evidence="5 6">
        <text>6-oxocampestanol + reduced [NADPH--hemoprotein reductase] + O2 = cathasterone + oxidized [NADPH--hemoprotein reductase] + H2O + H(+)</text>
        <dbReference type="Rhea" id="RHEA:70003"/>
        <dbReference type="Rhea" id="RHEA-COMP:11964"/>
        <dbReference type="Rhea" id="RHEA-COMP:11965"/>
        <dbReference type="ChEBI" id="CHEBI:15377"/>
        <dbReference type="ChEBI" id="CHEBI:15378"/>
        <dbReference type="ChEBI" id="CHEBI:15379"/>
        <dbReference type="ChEBI" id="CHEBI:20747"/>
        <dbReference type="ChEBI" id="CHEBI:23057"/>
        <dbReference type="ChEBI" id="CHEBI:57618"/>
        <dbReference type="ChEBI" id="CHEBI:58210"/>
    </reaction>
    <physiologicalReaction direction="left-to-right" evidence="5 6">
        <dbReference type="Rhea" id="RHEA:70004"/>
    </physiologicalReaction>
</comment>
<comment type="catalytic activity">
    <reaction evidence="5">
        <text>sitosterol + reduced [NADPH--hemoprotein reductase] + O2 = (22S)-22-hydroxysitosterol + oxidized [NADPH--hemoprotein reductase] + H2O + H(+)</text>
        <dbReference type="Rhea" id="RHEA:70071"/>
        <dbReference type="Rhea" id="RHEA-COMP:11964"/>
        <dbReference type="Rhea" id="RHEA-COMP:11965"/>
        <dbReference type="ChEBI" id="CHEBI:15377"/>
        <dbReference type="ChEBI" id="CHEBI:15378"/>
        <dbReference type="ChEBI" id="CHEBI:15379"/>
        <dbReference type="ChEBI" id="CHEBI:27693"/>
        <dbReference type="ChEBI" id="CHEBI:57618"/>
        <dbReference type="ChEBI" id="CHEBI:58210"/>
        <dbReference type="ChEBI" id="CHEBI:187980"/>
    </reaction>
    <physiologicalReaction direction="left-to-right" evidence="5">
        <dbReference type="Rhea" id="RHEA:70072"/>
    </physiologicalReaction>
</comment>
<comment type="cofactor">
    <cofactor evidence="1">
        <name>heme</name>
        <dbReference type="ChEBI" id="CHEBI:30413"/>
    </cofactor>
</comment>
<comment type="biophysicochemical properties">
    <kinetics>
        <KM evidence="5">0.35 uM for campesterol (at pH 7.25 and 30 degrees Celsius)</KM>
        <KM evidence="5">3 uM for campestanol (at pH 7.25 and 30 degrees Celsius)</KM>
        <text evidence="5">kcat is 1.8 min(-1) for campesterol (at pH 7.25 and 30 degrees Celsius) (PubMed:16460510). kcat is 0.049 min(-1) for campestanol (at pH 7.25 and 30 degrees Celsius) (PubMed:16460510).</text>
    </kinetics>
</comment>
<comment type="pathway">
    <text evidence="5 6">Plant hormone biosynthesis; brassinosteroid biosynthesis.</text>
</comment>
<comment type="subcellular location">
    <subcellularLocation>
        <location evidence="2">Membrane</location>
        <topology evidence="2">Single-pass membrane protein</topology>
    </subcellularLocation>
</comment>
<comment type="tissue specificity">
    <text evidence="4">Expressed in stems, leaves, shoots, and roots, with a higher expression in siliques and apical shoots.</text>
</comment>
<comment type="similarity">
    <text evidence="9">Belongs to the cytochrome P450 family.</text>
</comment>
<sequence length="513" mass="58868">MFETEHHTLLPLLLLPSLLSLLLFLILLKRRNRKTRFNLPPGKSGWPFLGETIGYLKPYTATTLGDFMQQHVSKYGKIYRSNLFGEPTIVSADAGLNRFILQNEGRLFECSYPRSIGGILGKWSMLVLVGDMHRDMRSISLNFLSHARLRTILLKDVERHTLFVLDSWQQNSIFSAQDEAKKFTFNLMAKHIMSMDPGEEETEQLKKEYVTFMKGVVSAPLNLPGTAYHKALQSRATILKFIERKMEERKLDIKEEDQEEEEVKTEDEAEMSKSDHVRKQRTDDDLLGWVLKHSNLSTEQILDLILSLLFAGHETSSVAIALAIFFLQACPKAVEELREEHLEIARAKKELGESELNWDDYKKMDFTQCVINETLRLGNVVRFLHRKALKDVRYKGYDIPSGWKVLPVISAVHLDNSRYDQPNLFNPWRWQQQNNGASSSGSGSFSTWGNNYMPFGGGPRLCAGSELAKLEMAVFIHHLVLKFNWELAEDDKPFAFPFVDFPNGLPIRVSRIL</sequence>
<keyword id="KW-1069">Brassinosteroid biosynthesis</keyword>
<keyword id="KW-0349">Heme</keyword>
<keyword id="KW-0408">Iron</keyword>
<keyword id="KW-0444">Lipid biosynthesis</keyword>
<keyword id="KW-0443">Lipid metabolism</keyword>
<keyword id="KW-0472">Membrane</keyword>
<keyword id="KW-0479">Metal-binding</keyword>
<keyword id="KW-0503">Monooxygenase</keyword>
<keyword id="KW-0560">Oxidoreductase</keyword>
<keyword id="KW-1185">Reference proteome</keyword>
<keyword id="KW-0752">Steroid biosynthesis</keyword>
<keyword id="KW-0812">Transmembrane</keyword>
<keyword id="KW-1133">Transmembrane helix</keyword>
<gene>
    <name evidence="8" type="primary">CYP90B1</name>
    <name evidence="8" type="synonym">DWF4</name>
    <name evidence="10" type="ordered locus">At3g50660</name>
    <name evidence="11" type="ORF">T3A5.40</name>
</gene>
<dbReference type="EC" id="1.14.14.178" evidence="5 6"/>
<dbReference type="EMBL" id="AF044216">
    <property type="protein sequence ID" value="AAC05093.1"/>
    <property type="molecule type" value="Genomic_DNA"/>
</dbReference>
<dbReference type="EMBL" id="AL132979">
    <property type="protein sequence ID" value="CAB62435.1"/>
    <property type="molecule type" value="Genomic_DNA"/>
</dbReference>
<dbReference type="EMBL" id="CP002686">
    <property type="protein sequence ID" value="AEE78691.1"/>
    <property type="molecule type" value="Genomic_DNA"/>
</dbReference>
<dbReference type="EMBL" id="AY090266">
    <property type="protein sequence ID" value="AAL90927.1"/>
    <property type="molecule type" value="mRNA"/>
</dbReference>
<dbReference type="EMBL" id="AF412114">
    <property type="protein sequence ID" value="AAL06567.1"/>
    <property type="molecule type" value="mRNA"/>
</dbReference>
<dbReference type="PIR" id="T46143">
    <property type="entry name" value="T46143"/>
</dbReference>
<dbReference type="RefSeq" id="NP_190635.1">
    <property type="nucleotide sequence ID" value="NM_114926.4"/>
</dbReference>
<dbReference type="SMR" id="O64989"/>
<dbReference type="FunCoup" id="O64989">
    <property type="interactions" value="190"/>
</dbReference>
<dbReference type="STRING" id="3702.O64989"/>
<dbReference type="PaxDb" id="3702-AT3G50660.1"/>
<dbReference type="ProteomicsDB" id="239121"/>
<dbReference type="EnsemblPlants" id="AT3G50660.1">
    <property type="protein sequence ID" value="AT3G50660.1"/>
    <property type="gene ID" value="AT3G50660"/>
</dbReference>
<dbReference type="GeneID" id="824229"/>
<dbReference type="Gramene" id="AT3G50660.1">
    <property type="protein sequence ID" value="AT3G50660.1"/>
    <property type="gene ID" value="AT3G50660"/>
</dbReference>
<dbReference type="KEGG" id="ath:AT3G50660"/>
<dbReference type="Araport" id="AT3G50660"/>
<dbReference type="TAIR" id="AT3G50660">
    <property type="gene designation" value="DWF4"/>
</dbReference>
<dbReference type="eggNOG" id="KOG0157">
    <property type="taxonomic scope" value="Eukaryota"/>
</dbReference>
<dbReference type="HOGENOM" id="CLU_001570_15_5_1"/>
<dbReference type="InParanoid" id="O64989"/>
<dbReference type="OMA" id="KLWNLYC"/>
<dbReference type="BioCyc" id="ARA:AT3G50660-MONOMER"/>
<dbReference type="BioCyc" id="MetaCyc:AT3G50660-MONOMER"/>
<dbReference type="BRENDA" id="1.14.99.B1">
    <property type="organism ID" value="399"/>
</dbReference>
<dbReference type="SABIO-RK" id="O64989"/>
<dbReference type="UniPathway" id="UPA00381"/>
<dbReference type="PRO" id="PR:O64989"/>
<dbReference type="Proteomes" id="UP000006548">
    <property type="component" value="Chromosome 3"/>
</dbReference>
<dbReference type="ExpressionAtlas" id="O64989">
    <property type="expression patterns" value="baseline and differential"/>
</dbReference>
<dbReference type="GO" id="GO:0005783">
    <property type="term" value="C:endoplasmic reticulum"/>
    <property type="evidence" value="ECO:0000314"/>
    <property type="project" value="TAIR"/>
</dbReference>
<dbReference type="GO" id="GO:0016020">
    <property type="term" value="C:membrane"/>
    <property type="evidence" value="ECO:0007669"/>
    <property type="project" value="UniProtKB-SubCell"/>
</dbReference>
<dbReference type="GO" id="GO:0080132">
    <property type="term" value="F:fatty acid 2-hydroxylase activity"/>
    <property type="evidence" value="ECO:0007669"/>
    <property type="project" value="EnsemblPlants"/>
</dbReference>
<dbReference type="GO" id="GO:0020037">
    <property type="term" value="F:heme binding"/>
    <property type="evidence" value="ECO:0007669"/>
    <property type="project" value="InterPro"/>
</dbReference>
<dbReference type="GO" id="GO:0005506">
    <property type="term" value="F:iron ion binding"/>
    <property type="evidence" value="ECO:0007669"/>
    <property type="project" value="InterPro"/>
</dbReference>
<dbReference type="GO" id="GO:0160191">
    <property type="term" value="F:steroid 22S-hydroxylase activity"/>
    <property type="evidence" value="ECO:0007669"/>
    <property type="project" value="RHEA"/>
</dbReference>
<dbReference type="GO" id="GO:0016132">
    <property type="term" value="P:brassinosteroid biosynthetic process"/>
    <property type="evidence" value="ECO:0000315"/>
    <property type="project" value="TAIR"/>
</dbReference>
<dbReference type="GO" id="GO:0009867">
    <property type="term" value="P:jasmonic acid mediated signaling pathway"/>
    <property type="evidence" value="ECO:0000316"/>
    <property type="project" value="TAIR"/>
</dbReference>
<dbReference type="GO" id="GO:0048366">
    <property type="term" value="P:leaf development"/>
    <property type="evidence" value="ECO:0000315"/>
    <property type="project" value="TAIR"/>
</dbReference>
<dbReference type="GO" id="GO:0010358">
    <property type="term" value="P:leaf shaping"/>
    <property type="evidence" value="ECO:0000315"/>
    <property type="project" value="TAIR"/>
</dbReference>
<dbReference type="GO" id="GO:0009741">
    <property type="term" value="P:response to brassinosteroid"/>
    <property type="evidence" value="ECO:0000315"/>
    <property type="project" value="TAIR"/>
</dbReference>
<dbReference type="GO" id="GO:0009753">
    <property type="term" value="P:response to jasmonic acid"/>
    <property type="evidence" value="ECO:0000315"/>
    <property type="project" value="TAIR"/>
</dbReference>
<dbReference type="GO" id="GO:0009826">
    <property type="term" value="P:unidimensional cell growth"/>
    <property type="evidence" value="ECO:0000315"/>
    <property type="project" value="TAIR"/>
</dbReference>
<dbReference type="CDD" id="cd11043">
    <property type="entry name" value="CYP90-like"/>
    <property type="match status" value="1"/>
</dbReference>
<dbReference type="FunFam" id="1.10.630.10:FF:000061">
    <property type="entry name" value="Cytochrome P450 90B1"/>
    <property type="match status" value="1"/>
</dbReference>
<dbReference type="Gene3D" id="1.10.630.10">
    <property type="entry name" value="Cytochrome P450"/>
    <property type="match status" value="1"/>
</dbReference>
<dbReference type="InterPro" id="IPR001128">
    <property type="entry name" value="Cyt_P450"/>
</dbReference>
<dbReference type="InterPro" id="IPR017972">
    <property type="entry name" value="Cyt_P450_CS"/>
</dbReference>
<dbReference type="InterPro" id="IPR002401">
    <property type="entry name" value="Cyt_P450_E_grp-I"/>
</dbReference>
<dbReference type="InterPro" id="IPR036396">
    <property type="entry name" value="Cyt_P450_sf"/>
</dbReference>
<dbReference type="PANTHER" id="PTHR24286">
    <property type="entry name" value="CYTOCHROME P450 26"/>
    <property type="match status" value="1"/>
</dbReference>
<dbReference type="PANTHER" id="PTHR24286:SF194">
    <property type="entry name" value="STEROID (22S)-HYDROXYLASE"/>
    <property type="match status" value="1"/>
</dbReference>
<dbReference type="Pfam" id="PF00067">
    <property type="entry name" value="p450"/>
    <property type="match status" value="1"/>
</dbReference>
<dbReference type="PRINTS" id="PR00463">
    <property type="entry name" value="EP450I"/>
</dbReference>
<dbReference type="PRINTS" id="PR00385">
    <property type="entry name" value="P450"/>
</dbReference>
<dbReference type="SUPFAM" id="SSF48264">
    <property type="entry name" value="Cytochrome P450"/>
    <property type="match status" value="1"/>
</dbReference>
<dbReference type="PROSITE" id="PS00086">
    <property type="entry name" value="CYTOCHROME_P450"/>
    <property type="match status" value="1"/>
</dbReference>